<reference key="1">
    <citation type="journal article" date="2004" name="Nat. Genet.">
        <title>Complete sequencing and characterization of 21,243 full-length human cDNAs.</title>
        <authorList>
            <person name="Ota T."/>
            <person name="Suzuki Y."/>
            <person name="Nishikawa T."/>
            <person name="Otsuki T."/>
            <person name="Sugiyama T."/>
            <person name="Irie R."/>
            <person name="Wakamatsu A."/>
            <person name="Hayashi K."/>
            <person name="Sato H."/>
            <person name="Nagai K."/>
            <person name="Kimura K."/>
            <person name="Makita H."/>
            <person name="Sekine M."/>
            <person name="Obayashi M."/>
            <person name="Nishi T."/>
            <person name="Shibahara T."/>
            <person name="Tanaka T."/>
            <person name="Ishii S."/>
            <person name="Yamamoto J."/>
            <person name="Saito K."/>
            <person name="Kawai Y."/>
            <person name="Isono Y."/>
            <person name="Nakamura Y."/>
            <person name="Nagahari K."/>
            <person name="Murakami K."/>
            <person name="Yasuda T."/>
            <person name="Iwayanagi T."/>
            <person name="Wagatsuma M."/>
            <person name="Shiratori A."/>
            <person name="Sudo H."/>
            <person name="Hosoiri T."/>
            <person name="Kaku Y."/>
            <person name="Kodaira H."/>
            <person name="Kondo H."/>
            <person name="Sugawara M."/>
            <person name="Takahashi M."/>
            <person name="Kanda K."/>
            <person name="Yokoi T."/>
            <person name="Furuya T."/>
            <person name="Kikkawa E."/>
            <person name="Omura Y."/>
            <person name="Abe K."/>
            <person name="Kamihara K."/>
            <person name="Katsuta N."/>
            <person name="Sato K."/>
            <person name="Tanikawa M."/>
            <person name="Yamazaki M."/>
            <person name="Ninomiya K."/>
            <person name="Ishibashi T."/>
            <person name="Yamashita H."/>
            <person name="Murakawa K."/>
            <person name="Fujimori K."/>
            <person name="Tanai H."/>
            <person name="Kimata M."/>
            <person name="Watanabe M."/>
            <person name="Hiraoka S."/>
            <person name="Chiba Y."/>
            <person name="Ishida S."/>
            <person name="Ono Y."/>
            <person name="Takiguchi S."/>
            <person name="Watanabe S."/>
            <person name="Yosida M."/>
            <person name="Hotuta T."/>
            <person name="Kusano J."/>
            <person name="Kanehori K."/>
            <person name="Takahashi-Fujii A."/>
            <person name="Hara H."/>
            <person name="Tanase T.-O."/>
            <person name="Nomura Y."/>
            <person name="Togiya S."/>
            <person name="Komai F."/>
            <person name="Hara R."/>
            <person name="Takeuchi K."/>
            <person name="Arita M."/>
            <person name="Imose N."/>
            <person name="Musashino K."/>
            <person name="Yuuki H."/>
            <person name="Oshima A."/>
            <person name="Sasaki N."/>
            <person name="Aotsuka S."/>
            <person name="Yoshikawa Y."/>
            <person name="Matsunawa H."/>
            <person name="Ichihara T."/>
            <person name="Shiohata N."/>
            <person name="Sano S."/>
            <person name="Moriya S."/>
            <person name="Momiyama H."/>
            <person name="Satoh N."/>
            <person name="Takami S."/>
            <person name="Terashima Y."/>
            <person name="Suzuki O."/>
            <person name="Nakagawa S."/>
            <person name="Senoh A."/>
            <person name="Mizoguchi H."/>
            <person name="Goto Y."/>
            <person name="Shimizu F."/>
            <person name="Wakebe H."/>
            <person name="Hishigaki H."/>
            <person name="Watanabe T."/>
            <person name="Sugiyama A."/>
            <person name="Takemoto M."/>
            <person name="Kawakami B."/>
            <person name="Yamazaki M."/>
            <person name="Watanabe K."/>
            <person name="Kumagai A."/>
            <person name="Itakura S."/>
            <person name="Fukuzumi Y."/>
            <person name="Fujimori Y."/>
            <person name="Komiyama M."/>
            <person name="Tashiro H."/>
            <person name="Tanigami A."/>
            <person name="Fujiwara T."/>
            <person name="Ono T."/>
            <person name="Yamada K."/>
            <person name="Fujii Y."/>
            <person name="Ozaki K."/>
            <person name="Hirao M."/>
            <person name="Ohmori Y."/>
            <person name="Kawabata A."/>
            <person name="Hikiji T."/>
            <person name="Kobatake N."/>
            <person name="Inagaki H."/>
            <person name="Ikema Y."/>
            <person name="Okamoto S."/>
            <person name="Okitani R."/>
            <person name="Kawakami T."/>
            <person name="Noguchi S."/>
            <person name="Itoh T."/>
            <person name="Shigeta K."/>
            <person name="Senba T."/>
            <person name="Matsumura K."/>
            <person name="Nakajima Y."/>
            <person name="Mizuno T."/>
            <person name="Morinaga M."/>
            <person name="Sasaki M."/>
            <person name="Togashi T."/>
            <person name="Oyama M."/>
            <person name="Hata H."/>
            <person name="Watanabe M."/>
            <person name="Komatsu T."/>
            <person name="Mizushima-Sugano J."/>
            <person name="Satoh T."/>
            <person name="Shirai Y."/>
            <person name="Takahashi Y."/>
            <person name="Nakagawa K."/>
            <person name="Okumura K."/>
            <person name="Nagase T."/>
            <person name="Nomura N."/>
            <person name="Kikuchi H."/>
            <person name="Masuho Y."/>
            <person name="Yamashita R."/>
            <person name="Nakai K."/>
            <person name="Yada T."/>
            <person name="Nakamura Y."/>
            <person name="Ohara O."/>
            <person name="Isogai T."/>
            <person name="Sugano S."/>
        </authorList>
    </citation>
    <scope>NUCLEOTIDE SEQUENCE [LARGE SCALE MRNA]</scope>
    <source>
        <tissue>Brain</tissue>
    </source>
</reference>
<reference key="2">
    <citation type="journal article" date="2004" name="Nature">
        <title>The DNA sequence and analysis of human chromosome 13.</title>
        <authorList>
            <person name="Dunham A."/>
            <person name="Matthews L.H."/>
            <person name="Burton J."/>
            <person name="Ashurst J.L."/>
            <person name="Howe K.L."/>
            <person name="Ashcroft K.J."/>
            <person name="Beare D.M."/>
            <person name="Burford D.C."/>
            <person name="Hunt S.E."/>
            <person name="Griffiths-Jones S."/>
            <person name="Jones M.C."/>
            <person name="Keenan S.J."/>
            <person name="Oliver K."/>
            <person name="Scott C.E."/>
            <person name="Ainscough R."/>
            <person name="Almeida J.P."/>
            <person name="Ambrose K.D."/>
            <person name="Andrews D.T."/>
            <person name="Ashwell R.I.S."/>
            <person name="Babbage A.K."/>
            <person name="Bagguley C.L."/>
            <person name="Bailey J."/>
            <person name="Bannerjee R."/>
            <person name="Barlow K.F."/>
            <person name="Bates K."/>
            <person name="Beasley H."/>
            <person name="Bird C.P."/>
            <person name="Bray-Allen S."/>
            <person name="Brown A.J."/>
            <person name="Brown J.Y."/>
            <person name="Burrill W."/>
            <person name="Carder C."/>
            <person name="Carter N.P."/>
            <person name="Chapman J.C."/>
            <person name="Clamp M.E."/>
            <person name="Clark S.Y."/>
            <person name="Clarke G."/>
            <person name="Clee C.M."/>
            <person name="Clegg S.C."/>
            <person name="Cobley V."/>
            <person name="Collins J.E."/>
            <person name="Corby N."/>
            <person name="Coville G.J."/>
            <person name="Deloukas P."/>
            <person name="Dhami P."/>
            <person name="Dunham I."/>
            <person name="Dunn M."/>
            <person name="Earthrowl M.E."/>
            <person name="Ellington A.G."/>
            <person name="Faulkner L."/>
            <person name="Frankish A.G."/>
            <person name="Frankland J."/>
            <person name="French L."/>
            <person name="Garner P."/>
            <person name="Garnett J."/>
            <person name="Gilbert J.G.R."/>
            <person name="Gilson C.J."/>
            <person name="Ghori J."/>
            <person name="Grafham D.V."/>
            <person name="Gribble S.M."/>
            <person name="Griffiths C."/>
            <person name="Hall R.E."/>
            <person name="Hammond S."/>
            <person name="Harley J.L."/>
            <person name="Hart E.A."/>
            <person name="Heath P.D."/>
            <person name="Howden P.J."/>
            <person name="Huckle E.J."/>
            <person name="Hunt P.J."/>
            <person name="Hunt A.R."/>
            <person name="Johnson C."/>
            <person name="Johnson D."/>
            <person name="Kay M."/>
            <person name="Kimberley A.M."/>
            <person name="King A."/>
            <person name="Laird G.K."/>
            <person name="Langford C.J."/>
            <person name="Lawlor S."/>
            <person name="Leongamornlert D.A."/>
            <person name="Lloyd D.M."/>
            <person name="Lloyd C."/>
            <person name="Loveland J.E."/>
            <person name="Lovell J."/>
            <person name="Martin S."/>
            <person name="Mashreghi-Mohammadi M."/>
            <person name="McLaren S.J."/>
            <person name="McMurray A."/>
            <person name="Milne S."/>
            <person name="Moore M.J.F."/>
            <person name="Nickerson T."/>
            <person name="Palmer S.A."/>
            <person name="Pearce A.V."/>
            <person name="Peck A.I."/>
            <person name="Pelan S."/>
            <person name="Phillimore B."/>
            <person name="Porter K.M."/>
            <person name="Rice C.M."/>
            <person name="Searle S."/>
            <person name="Sehra H.K."/>
            <person name="Shownkeen R."/>
            <person name="Skuce C.D."/>
            <person name="Smith M."/>
            <person name="Steward C.A."/>
            <person name="Sycamore N."/>
            <person name="Tester J."/>
            <person name="Thomas D.W."/>
            <person name="Tracey A."/>
            <person name="Tromans A."/>
            <person name="Tubby B."/>
            <person name="Wall M."/>
            <person name="Wallis J.M."/>
            <person name="West A.P."/>
            <person name="Whitehead S.L."/>
            <person name="Willey D.L."/>
            <person name="Wilming L."/>
            <person name="Wray P.W."/>
            <person name="Wright M.W."/>
            <person name="Young L."/>
            <person name="Coulson A."/>
            <person name="Durbin R.M."/>
            <person name="Hubbard T."/>
            <person name="Sulston J.E."/>
            <person name="Beck S."/>
            <person name="Bentley D.R."/>
            <person name="Rogers J."/>
            <person name="Ross M.T."/>
        </authorList>
    </citation>
    <scope>NUCLEOTIDE SEQUENCE [LARGE SCALE GENOMIC DNA]</scope>
</reference>
<reference key="3">
    <citation type="submission" date="2005-07" db="EMBL/GenBank/DDBJ databases">
        <authorList>
            <person name="Mural R.J."/>
            <person name="Istrail S."/>
            <person name="Sutton G.G."/>
            <person name="Florea L."/>
            <person name="Halpern A.L."/>
            <person name="Mobarry C.M."/>
            <person name="Lippert R."/>
            <person name="Walenz B."/>
            <person name="Shatkay H."/>
            <person name="Dew I."/>
            <person name="Miller J.R."/>
            <person name="Flanigan M.J."/>
            <person name="Edwards N.J."/>
            <person name="Bolanos R."/>
            <person name="Fasulo D."/>
            <person name="Halldorsson B.V."/>
            <person name="Hannenhalli S."/>
            <person name="Turner R."/>
            <person name="Yooseph S."/>
            <person name="Lu F."/>
            <person name="Nusskern D.R."/>
            <person name="Shue B.C."/>
            <person name="Zheng X.H."/>
            <person name="Zhong F."/>
            <person name="Delcher A.L."/>
            <person name="Huson D.H."/>
            <person name="Kravitz S.A."/>
            <person name="Mouchard L."/>
            <person name="Reinert K."/>
            <person name="Remington K.A."/>
            <person name="Clark A.G."/>
            <person name="Waterman M.S."/>
            <person name="Eichler E.E."/>
            <person name="Adams M.D."/>
            <person name="Hunkapiller M.W."/>
            <person name="Myers E.W."/>
            <person name="Venter J.C."/>
        </authorList>
    </citation>
    <scope>NUCLEOTIDE SEQUENCE [LARGE SCALE GENOMIC DNA]</scope>
</reference>
<reference key="4">
    <citation type="journal article" date="2004" name="Genome Res.">
        <title>The status, quality, and expansion of the NIH full-length cDNA project: the Mammalian Gene Collection (MGC).</title>
        <authorList>
            <consortium name="The MGC Project Team"/>
        </authorList>
    </citation>
    <scope>NUCLEOTIDE SEQUENCE [LARGE SCALE MRNA]</scope>
    <source>
        <tissue>Kidney</tissue>
    </source>
</reference>
<reference key="5">
    <citation type="journal article" date="2012" name="PLoS Genet.">
        <title>KATNAL1 regulation of Sertoli cell microtubule dynamics is essential for spermiogenesis and male fertility.</title>
        <authorList>
            <person name="Smith L.B."/>
            <person name="Milne L."/>
            <person name="Nelson N."/>
            <person name="Eddie S."/>
            <person name="Brown P."/>
            <person name="Atanassova N."/>
            <person name="O'Bryan M.K."/>
            <person name="O'Donnell L."/>
            <person name="Rhodes D."/>
            <person name="Wells S."/>
            <person name="Napper D."/>
            <person name="Nolan P."/>
            <person name="Lalanne Z."/>
            <person name="Cheeseman M."/>
            <person name="Peters J."/>
        </authorList>
    </citation>
    <scope>SUBCELLULAR LOCATION</scope>
    <scope>TISSUE SPECIFICITY</scope>
</reference>
<reference key="6">
    <citation type="journal article" date="2012" name="Proc. Natl. Acad. Sci. U.S.A.">
        <title>N-terminal acetylome analyses and functional insights of the N-terminal acetyltransferase NatB.</title>
        <authorList>
            <person name="Van Damme P."/>
            <person name="Lasa M."/>
            <person name="Polevoda B."/>
            <person name="Gazquez C."/>
            <person name="Elosegui-Artola A."/>
            <person name="Kim D.S."/>
            <person name="De Juan-Pardo E."/>
            <person name="Demeyer K."/>
            <person name="Hole K."/>
            <person name="Larrea E."/>
            <person name="Timmerman E."/>
            <person name="Prieto J."/>
            <person name="Arnesen T."/>
            <person name="Sherman F."/>
            <person name="Gevaert K."/>
            <person name="Aldabe R."/>
        </authorList>
    </citation>
    <scope>ACETYLATION [LARGE SCALE ANALYSIS] AT MET-1</scope>
    <scope>IDENTIFICATION BY MASS SPECTROMETRY [LARGE SCALE ANALYSIS]</scope>
</reference>
<reference key="7">
    <citation type="journal article" date="2016" name="Mol. Cell. Proteomics">
        <title>Proteomic analysis of the mammalian Katanin family of microtubule-severing enzymes defines Katanin p80 subunit B-like 1 (KATNBL1) as a regulator of mammalian Katanin microtubule-severing.</title>
        <authorList>
            <person name="Cheung K."/>
            <person name="Senese S."/>
            <person name="Kuang J."/>
            <person name="Bui N."/>
            <person name="Ongpipattanakul C."/>
            <person name="Gholkar A."/>
            <person name="Cohn W."/>
            <person name="Capri J."/>
            <person name="Whitelegge J.P."/>
            <person name="Torres J.Z."/>
        </authorList>
    </citation>
    <scope>FUNCTION</scope>
    <scope>INTERACTION WITH KATNB1 AND KATNBL1</scope>
    <scope>SUBCELLULAR LOCATION</scope>
</reference>
<accession>Q9BW62</accession>
<accession>A8K5X4</accession>
<evidence type="ECO:0000250" key="1">
    <source>
        <dbReference type="UniProtKB" id="Q5XIK7"/>
    </source>
</evidence>
<evidence type="ECO:0000250" key="2">
    <source>
        <dbReference type="UniProtKB" id="Q8K0T4"/>
    </source>
</evidence>
<evidence type="ECO:0000255" key="3">
    <source>
        <dbReference type="HAMAP-Rule" id="MF_03024"/>
    </source>
</evidence>
<evidence type="ECO:0000256" key="4">
    <source>
        <dbReference type="SAM" id="MobiDB-lite"/>
    </source>
</evidence>
<evidence type="ECO:0000269" key="5">
    <source>
    </source>
</evidence>
<evidence type="ECO:0000269" key="6">
    <source>
    </source>
</evidence>
<evidence type="ECO:0007744" key="7">
    <source>
    </source>
</evidence>
<evidence type="ECO:0007829" key="8">
    <source>
        <dbReference type="PDB" id="6B5C"/>
    </source>
</evidence>
<sequence length="490" mass="55392">MNLAEICDNAKKGREYALLGNYDSSMVYYQGVMQQIQRHCQSVRDPAIKGKWQQVRQELLEEYEQVKSIVSTLESFKIDKPPDFPVSCQDEPFRDPAVWPPPVPAEHRAPPQIRRPNREVRPLRKEMAGVGARGPVGRAHPISKSEKPSTSRDKDYRARGRDDKGRKNMQDGASDGEMPKFDGAGYDKDLVEALERDIVSRNPSIHWDDIADLEEAKKLLREAVVLPMWMPDFFKGIRRPWKGVLMVGPPGTGKTMLAKAVATECGTTFFNVSSSTLTSKYRGESEKLVRLLFEMARFYAPTTIFIDEIDSICSRRGTSDEHEASRRVKSELLIQMDGVGGALENDDPSKMVMVLAATNFPWDIDEALRRRLEKRIYIPLPTAKGRAELLKINLREVELDPDIQLEDIAEKIEGYSGADITNVCRDASLMAMRRRINGLSPEEIRALSKEELQMPVTKGDFELALKKIAKSVSAADLEKYEKWMVEFGSA</sequence>
<proteinExistence type="evidence at protein level"/>
<organism>
    <name type="scientific">Homo sapiens</name>
    <name type="common">Human</name>
    <dbReference type="NCBI Taxonomy" id="9606"/>
    <lineage>
        <taxon>Eukaryota</taxon>
        <taxon>Metazoa</taxon>
        <taxon>Chordata</taxon>
        <taxon>Craniata</taxon>
        <taxon>Vertebrata</taxon>
        <taxon>Euteleostomi</taxon>
        <taxon>Mammalia</taxon>
        <taxon>Eutheria</taxon>
        <taxon>Euarchontoglires</taxon>
        <taxon>Primates</taxon>
        <taxon>Haplorrhini</taxon>
        <taxon>Catarrhini</taxon>
        <taxon>Hominidae</taxon>
        <taxon>Homo</taxon>
    </lineage>
</organism>
<name>KATL1_HUMAN</name>
<protein>
    <recommendedName>
        <fullName evidence="3">Katanin p60 ATPase-containing subunit A-like 1</fullName>
        <shortName evidence="3">Katanin p60 subunit A-like 1</shortName>
        <ecNumber evidence="3">5.6.1.1</ecNumber>
    </recommendedName>
    <alternativeName>
        <fullName evidence="3">p60 katanin-like 1</fullName>
    </alternativeName>
</protein>
<comment type="function">
    <text evidence="2 6">Regulates microtubule dynamics in Sertoli cells, a process that is essential for spermiogenesis and male fertility. Severs microtubules in an ATP-dependent manner, promoting rapid reorganization of cellular microtubule arrays (By similarity). Has microtubule-severing activity in vitro (PubMed:26929214).</text>
</comment>
<comment type="catalytic activity">
    <reaction evidence="3">
        <text>n ATP + n H2O + a microtubule = n ADP + n phosphate + (n+1) alpha/beta tubulin heterodimers.</text>
        <dbReference type="EC" id="5.6.1.1"/>
    </reaction>
</comment>
<comment type="subunit">
    <text evidence="6">Interacts with KATNB1 and KATNBL1.</text>
</comment>
<comment type="interaction">
    <interactant intactId="EBI-743591">
        <id>Q9BW62</id>
    </interactant>
    <interactant intactId="EBI-8643161">
        <id>Q9NX04</id>
        <label>AIRIM</label>
    </interactant>
    <organismsDiffer>false</organismsDiffer>
    <experiments>6</experiments>
</comment>
<comment type="interaction">
    <interactant intactId="EBI-743591">
        <id>Q9BW62</id>
    </interactant>
    <interactant intactId="EBI-711197">
        <id>Q9H1I8</id>
        <label>ASCC2</label>
    </interactant>
    <organismsDiffer>false</organismsDiffer>
    <experiments>3</experiments>
</comment>
<comment type="interaction">
    <interactant intactId="EBI-743591">
        <id>Q9BW62</id>
    </interactant>
    <interactant intactId="EBI-358049">
        <id>Q13895</id>
        <label>BYSL</label>
    </interactant>
    <organismsDiffer>false</organismsDiffer>
    <experiments>3</experiments>
</comment>
<comment type="interaction">
    <interactant intactId="EBI-743591">
        <id>Q9BW62</id>
    </interactant>
    <interactant intactId="EBI-1104570">
        <id>Q8IYX8</id>
        <label>CEP57L1</label>
    </interactant>
    <organismsDiffer>false</organismsDiffer>
    <experiments>9</experiments>
</comment>
<comment type="interaction">
    <interactant intactId="EBI-743591">
        <id>Q9BW62</id>
    </interactant>
    <interactant intactId="EBI-10181988">
        <id>Q8IYX8-2</id>
        <label>CEP57L1</label>
    </interactant>
    <organismsDiffer>false</organismsDiffer>
    <experiments>3</experiments>
</comment>
<comment type="interaction">
    <interactant intactId="EBI-743591">
        <id>Q9BW62</id>
    </interactant>
    <interactant intactId="EBI-711311">
        <id>Q14061</id>
        <label>COX17</label>
    </interactant>
    <organismsDiffer>false</organismsDiffer>
    <experiments>4</experiments>
</comment>
<comment type="interaction">
    <interactant intactId="EBI-743591">
        <id>Q9BW62</id>
    </interactant>
    <interactant intactId="EBI-11962928">
        <id>Q9UI47-2</id>
        <label>CTNNA3</label>
    </interactant>
    <organismsDiffer>false</organismsDiffer>
    <experiments>3</experiments>
</comment>
<comment type="interaction">
    <interactant intactId="EBI-743591">
        <id>Q9BW62</id>
    </interactant>
    <interactant intactId="EBI-746252">
        <id>Q96CN9</id>
        <label>GCC1</label>
    </interactant>
    <organismsDiffer>false</organismsDiffer>
    <experiments>3</experiments>
</comment>
<comment type="interaction">
    <interactant intactId="EBI-743591">
        <id>Q9BW62</id>
    </interactant>
    <interactant intactId="EBI-6873005">
        <id>P43080</id>
        <label>GUCA1A</label>
    </interactant>
    <organismsDiffer>false</organismsDiffer>
    <experiments>3</experiments>
</comment>
<comment type="interaction">
    <interactant intactId="EBI-743591">
        <id>Q9BW62</id>
    </interactant>
    <interactant intactId="EBI-10220600">
        <id>Q8NA54</id>
        <label>IQUB</label>
    </interactant>
    <organismsDiffer>false</organismsDiffer>
    <experiments>3</experiments>
</comment>
<comment type="interaction">
    <interactant intactId="EBI-743591">
        <id>Q9BW62</id>
    </interactant>
    <interactant intactId="EBI-743591">
        <id>Q9BW62</id>
        <label>KATNAL1</label>
    </interactant>
    <organismsDiffer>false</organismsDiffer>
    <experiments>4</experiments>
</comment>
<comment type="interaction">
    <interactant intactId="EBI-743591">
        <id>Q9BW62</id>
    </interactant>
    <interactant intactId="EBI-11147603">
        <id>Q9BVA0</id>
        <label>KATNB1</label>
    </interactant>
    <organismsDiffer>false</organismsDiffer>
    <experiments>8</experiments>
</comment>
<comment type="interaction">
    <interactant intactId="EBI-743591">
        <id>Q9BW62</id>
    </interactant>
    <interactant intactId="EBI-715394">
        <id>Q9H079</id>
        <label>KATNBL1</label>
    </interactant>
    <organismsDiffer>false</organismsDiffer>
    <experiments>20</experiments>
</comment>
<comment type="interaction">
    <interactant intactId="EBI-743591">
        <id>Q9BW62</id>
    </interactant>
    <interactant intactId="EBI-949319">
        <id>Q9NSK0</id>
        <label>KLC4</label>
    </interactant>
    <organismsDiffer>false</organismsDiffer>
    <experiments>6</experiments>
</comment>
<comment type="interaction">
    <interactant intactId="EBI-743591">
        <id>Q9BW62</id>
    </interactant>
    <interactant intactId="EBI-16439278">
        <id>Q6FHY5</id>
        <label>MEOX2</label>
    </interactant>
    <organismsDiffer>false</organismsDiffer>
    <experiments>3</experiments>
</comment>
<comment type="interaction">
    <interactant intactId="EBI-743591">
        <id>Q9BW62</id>
    </interactant>
    <interactant intactId="EBI-2511669">
        <id>P15259</id>
        <label>PGAM2</label>
    </interactant>
    <organismsDiffer>false</organismsDiffer>
    <experiments>3</experiments>
</comment>
<comment type="interaction">
    <interactant intactId="EBI-743591">
        <id>Q9BW62</id>
    </interactant>
    <interactant intactId="EBI-14223623">
        <id>Q9UKF7-2</id>
        <label>PITPNC1</label>
    </interactant>
    <organismsDiffer>false</organismsDiffer>
    <experiments>3</experiments>
</comment>
<comment type="interaction">
    <interactant intactId="EBI-743591">
        <id>Q9BW62</id>
    </interactant>
    <interactant intactId="EBI-747107">
        <id>Q8IUQ4</id>
        <label>SIAH1</label>
    </interactant>
    <organismsDiffer>false</organismsDiffer>
    <experiments>3</experiments>
</comment>
<comment type="interaction">
    <interactant intactId="EBI-743591">
        <id>Q9BW62</id>
    </interactant>
    <interactant intactId="EBI-2514459">
        <id>O75351</id>
        <label>VPS4B</label>
    </interactant>
    <organismsDiffer>false</organismsDiffer>
    <experiments>3</experiments>
</comment>
<comment type="interaction">
    <interactant intactId="EBI-743591">
        <id>Q9BW62</id>
    </interactant>
    <interactant intactId="EBI-10320266">
        <id>Q9UC07</id>
        <label>ZNF69</label>
    </interactant>
    <organismsDiffer>false</organismsDiffer>
    <experiments>3</experiments>
</comment>
<comment type="interaction">
    <interactant intactId="EBI-743591">
        <id>Q9BW62</id>
    </interactant>
    <interactant intactId="EBI-12310821">
        <id>Q9UC07-2</id>
        <label>ZNF69</label>
    </interactant>
    <organismsDiffer>false</organismsDiffer>
    <experiments>6</experiments>
</comment>
<comment type="subcellular location">
    <subcellularLocation>
        <location evidence="3 5">Cytoplasm</location>
        <location evidence="3 5">Cytoskeleton</location>
    </subcellularLocation>
    <subcellularLocation>
        <location evidence="6">Cytoplasm</location>
    </subcellularLocation>
    <subcellularLocation>
        <location evidence="6">Cytoplasm</location>
        <location evidence="6">Cytoskeleton</location>
        <location evidence="6">Spindle pole</location>
    </subcellularLocation>
    <subcellularLocation>
        <location evidence="6">Cytoplasm</location>
        <location evidence="6">Cytoskeleton</location>
        <location evidence="6">Spindle</location>
    </subcellularLocation>
    <text evidence="2 6">Colocalizes with microtubules throughout the basal and adluminal compartments of Sertoli cells (By similarity). Localizes within the cytoplasm, partially overlapping with microtubules, in interphase and to the mitotic spindle and spindle poles during mitosis (PubMed:26929214).</text>
</comment>
<comment type="tissue specificity">
    <text evidence="5">Expressed in testis, restricted to Sertoli cells (at protein level).</text>
</comment>
<comment type="similarity">
    <text evidence="3">Belongs to the AAA ATPase family. Katanin p60 subunit A1 subfamily. A-like 1 sub-subfamily.</text>
</comment>
<dbReference type="EC" id="5.6.1.1" evidence="3"/>
<dbReference type="EMBL" id="AK291439">
    <property type="protein sequence ID" value="BAF84128.1"/>
    <property type="molecule type" value="mRNA"/>
</dbReference>
<dbReference type="EMBL" id="AL356750">
    <property type="status" value="NOT_ANNOTATED_CDS"/>
    <property type="molecule type" value="Genomic_DNA"/>
</dbReference>
<dbReference type="EMBL" id="CH471075">
    <property type="protein sequence ID" value="EAX08452.1"/>
    <property type="molecule type" value="Genomic_DNA"/>
</dbReference>
<dbReference type="EMBL" id="BC000612">
    <property type="protein sequence ID" value="AAH00612.1"/>
    <property type="molecule type" value="mRNA"/>
</dbReference>
<dbReference type="CCDS" id="CCDS31956.1"/>
<dbReference type="RefSeq" id="NP_001014402.1">
    <property type="nucleotide sequence ID" value="NM_001014380.3"/>
</dbReference>
<dbReference type="RefSeq" id="NP_115492.1">
    <property type="nucleotide sequence ID" value="NM_032116.5"/>
</dbReference>
<dbReference type="RefSeq" id="XP_005266631.1">
    <property type="nucleotide sequence ID" value="XM_005266574.4"/>
</dbReference>
<dbReference type="RefSeq" id="XP_024305191.1">
    <property type="nucleotide sequence ID" value="XM_024449423.2"/>
</dbReference>
<dbReference type="RefSeq" id="XP_024305192.1">
    <property type="nucleotide sequence ID" value="XM_024449424.2"/>
</dbReference>
<dbReference type="RefSeq" id="XP_047286659.1">
    <property type="nucleotide sequence ID" value="XM_047430703.1"/>
</dbReference>
<dbReference type="PDB" id="6B5C">
    <property type="method" value="X-ray"/>
    <property type="resolution" value="2.40 A"/>
    <property type="chains" value="A=184-490"/>
</dbReference>
<dbReference type="PDBsum" id="6B5C"/>
<dbReference type="SMR" id="Q9BW62"/>
<dbReference type="BioGRID" id="123851">
    <property type="interactions" value="39"/>
</dbReference>
<dbReference type="ComplexPortal" id="CPX-6381">
    <property type="entry name" value="Katanin complex, KATNAL1-KATNBL1 variant"/>
</dbReference>
<dbReference type="ComplexPortal" id="CPX-6382">
    <property type="entry name" value="Katanin complex, KATNAL1-KATNB1 variant"/>
</dbReference>
<dbReference type="CORUM" id="Q9BW62"/>
<dbReference type="FunCoup" id="Q9BW62">
    <property type="interactions" value="889"/>
</dbReference>
<dbReference type="IntAct" id="Q9BW62">
    <property type="interactions" value="52"/>
</dbReference>
<dbReference type="STRING" id="9606.ENSP00000369989"/>
<dbReference type="GlyGen" id="Q9BW62">
    <property type="glycosylation" value="2 sites, 1 N-linked glycan (1 site), 1 O-linked glycan (1 site)"/>
</dbReference>
<dbReference type="iPTMnet" id="Q9BW62"/>
<dbReference type="PhosphoSitePlus" id="Q9BW62"/>
<dbReference type="BioMuta" id="KATNAL1"/>
<dbReference type="DMDM" id="60390214"/>
<dbReference type="jPOST" id="Q9BW62"/>
<dbReference type="MassIVE" id="Q9BW62"/>
<dbReference type="PaxDb" id="9606-ENSP00000369989"/>
<dbReference type="PeptideAtlas" id="Q9BW62"/>
<dbReference type="ProteomicsDB" id="79256"/>
<dbReference type="Pumba" id="Q9BW62"/>
<dbReference type="Antibodypedia" id="49047">
    <property type="antibodies" value="200 antibodies from 20 providers"/>
</dbReference>
<dbReference type="DNASU" id="84056"/>
<dbReference type="Ensembl" id="ENST00000380615.8">
    <property type="protein sequence ID" value="ENSP00000369989.3"/>
    <property type="gene ID" value="ENSG00000102781.14"/>
</dbReference>
<dbReference type="Ensembl" id="ENST00000380617.7">
    <property type="protein sequence ID" value="ENSP00000369991.3"/>
    <property type="gene ID" value="ENSG00000102781.14"/>
</dbReference>
<dbReference type="GeneID" id="84056"/>
<dbReference type="KEGG" id="hsa:84056"/>
<dbReference type="MANE-Select" id="ENST00000380615.8">
    <property type="protein sequence ID" value="ENSP00000369989.3"/>
    <property type="RefSeq nucleotide sequence ID" value="NM_032116.5"/>
    <property type="RefSeq protein sequence ID" value="NP_115492.1"/>
</dbReference>
<dbReference type="UCSC" id="uc001uss.5">
    <property type="organism name" value="human"/>
</dbReference>
<dbReference type="AGR" id="HGNC:28361"/>
<dbReference type="CTD" id="84056"/>
<dbReference type="DisGeNET" id="84056"/>
<dbReference type="GeneCards" id="KATNAL1"/>
<dbReference type="HGNC" id="HGNC:28361">
    <property type="gene designation" value="KATNAL1"/>
</dbReference>
<dbReference type="HPA" id="ENSG00000102781">
    <property type="expression patterns" value="Low tissue specificity"/>
</dbReference>
<dbReference type="MIM" id="614764">
    <property type="type" value="gene"/>
</dbReference>
<dbReference type="neXtProt" id="NX_Q9BW62"/>
<dbReference type="OpenTargets" id="ENSG00000102781"/>
<dbReference type="PharmGKB" id="PA134951885"/>
<dbReference type="VEuPathDB" id="HostDB:ENSG00000102781"/>
<dbReference type="eggNOG" id="KOG0738">
    <property type="taxonomic scope" value="Eukaryota"/>
</dbReference>
<dbReference type="GeneTree" id="ENSGT00940000156630"/>
<dbReference type="HOGENOM" id="CLU_000688_21_1_1"/>
<dbReference type="InParanoid" id="Q9BW62"/>
<dbReference type="OMA" id="TAKMMPV"/>
<dbReference type="OrthoDB" id="5334845at2759"/>
<dbReference type="PAN-GO" id="Q9BW62">
    <property type="GO annotations" value="2 GO annotations based on evolutionary models"/>
</dbReference>
<dbReference type="PhylomeDB" id="Q9BW62"/>
<dbReference type="TreeFam" id="TF323170"/>
<dbReference type="BRENDA" id="5.6.1.1">
    <property type="organism ID" value="2681"/>
</dbReference>
<dbReference type="PathwayCommons" id="Q9BW62"/>
<dbReference type="SignaLink" id="Q9BW62"/>
<dbReference type="BioGRID-ORCS" id="84056">
    <property type="hits" value="11 hits in 1155 CRISPR screens"/>
</dbReference>
<dbReference type="ChiTaRS" id="KATNAL1">
    <property type="organism name" value="human"/>
</dbReference>
<dbReference type="GenomeRNAi" id="84056"/>
<dbReference type="Pharos" id="Q9BW62">
    <property type="development level" value="Tbio"/>
</dbReference>
<dbReference type="PRO" id="PR:Q9BW62"/>
<dbReference type="Proteomes" id="UP000005640">
    <property type="component" value="Chromosome 13"/>
</dbReference>
<dbReference type="RNAct" id="Q9BW62">
    <property type="molecule type" value="protein"/>
</dbReference>
<dbReference type="Bgee" id="ENSG00000102781">
    <property type="expression patterns" value="Expressed in secondary oocyte and 187 other cell types or tissues"/>
</dbReference>
<dbReference type="ExpressionAtlas" id="Q9BW62">
    <property type="expression patterns" value="baseline and differential"/>
</dbReference>
<dbReference type="GO" id="GO:0005813">
    <property type="term" value="C:centrosome"/>
    <property type="evidence" value="ECO:0000314"/>
    <property type="project" value="HPA"/>
</dbReference>
<dbReference type="GO" id="GO:0005737">
    <property type="term" value="C:cytoplasm"/>
    <property type="evidence" value="ECO:0000314"/>
    <property type="project" value="UniProtKB"/>
</dbReference>
<dbReference type="GO" id="GO:0005829">
    <property type="term" value="C:cytosol"/>
    <property type="evidence" value="ECO:0000314"/>
    <property type="project" value="HPA"/>
</dbReference>
<dbReference type="GO" id="GO:0008352">
    <property type="term" value="C:katanin complex"/>
    <property type="evidence" value="ECO:0000353"/>
    <property type="project" value="ComplexPortal"/>
</dbReference>
<dbReference type="GO" id="GO:0005874">
    <property type="term" value="C:microtubule"/>
    <property type="evidence" value="ECO:0000314"/>
    <property type="project" value="UniProtKB"/>
</dbReference>
<dbReference type="GO" id="GO:0015630">
    <property type="term" value="C:microtubule cytoskeleton"/>
    <property type="evidence" value="ECO:0000318"/>
    <property type="project" value="GO_Central"/>
</dbReference>
<dbReference type="GO" id="GO:0005739">
    <property type="term" value="C:mitochondrion"/>
    <property type="evidence" value="ECO:0000314"/>
    <property type="project" value="HPA"/>
</dbReference>
<dbReference type="GO" id="GO:0072686">
    <property type="term" value="C:mitotic spindle"/>
    <property type="evidence" value="ECO:0000314"/>
    <property type="project" value="HPA"/>
</dbReference>
<dbReference type="GO" id="GO:0005819">
    <property type="term" value="C:spindle"/>
    <property type="evidence" value="ECO:0000314"/>
    <property type="project" value="UniProtKB"/>
</dbReference>
<dbReference type="GO" id="GO:0000922">
    <property type="term" value="C:spindle pole"/>
    <property type="evidence" value="ECO:0000314"/>
    <property type="project" value="UniProtKB"/>
</dbReference>
<dbReference type="GO" id="GO:0005524">
    <property type="term" value="F:ATP binding"/>
    <property type="evidence" value="ECO:0007669"/>
    <property type="project" value="UniProtKB-KW"/>
</dbReference>
<dbReference type="GO" id="GO:0016887">
    <property type="term" value="F:ATP hydrolysis activity"/>
    <property type="evidence" value="ECO:0000318"/>
    <property type="project" value="GO_Central"/>
</dbReference>
<dbReference type="GO" id="GO:0042802">
    <property type="term" value="F:identical protein binding"/>
    <property type="evidence" value="ECO:0000353"/>
    <property type="project" value="IntAct"/>
</dbReference>
<dbReference type="GO" id="GO:0008017">
    <property type="term" value="F:microtubule binding"/>
    <property type="evidence" value="ECO:0007669"/>
    <property type="project" value="UniProtKB-UniRule"/>
</dbReference>
<dbReference type="GO" id="GO:0008568">
    <property type="term" value="F:microtubule severing ATPase activity"/>
    <property type="evidence" value="ECO:0000314"/>
    <property type="project" value="UniProtKB"/>
</dbReference>
<dbReference type="GO" id="GO:0031122">
    <property type="term" value="P:cytoplasmic microtubule organization"/>
    <property type="evidence" value="ECO:0000303"/>
    <property type="project" value="ComplexPortal"/>
</dbReference>
<dbReference type="GO" id="GO:0051013">
    <property type="term" value="P:microtubule severing"/>
    <property type="evidence" value="ECO:0000314"/>
    <property type="project" value="UniProtKB"/>
</dbReference>
<dbReference type="GO" id="GO:0007283">
    <property type="term" value="P:spermatogenesis"/>
    <property type="evidence" value="ECO:0007669"/>
    <property type="project" value="UniProtKB-UniRule"/>
</dbReference>
<dbReference type="CDD" id="cd21748">
    <property type="entry name" value="Kp60-NTD"/>
    <property type="match status" value="1"/>
</dbReference>
<dbReference type="CDD" id="cd19522">
    <property type="entry name" value="RecA-like_KTNA1"/>
    <property type="match status" value="1"/>
</dbReference>
<dbReference type="FunFam" id="1.10.8.60:FF:000025">
    <property type="entry name" value="Katanin p60 ATPase-containing subunit A1"/>
    <property type="match status" value="1"/>
</dbReference>
<dbReference type="FunFam" id="1.20.58.80:FF:000003">
    <property type="entry name" value="Katanin p60 ATPase-containing subunit A1"/>
    <property type="match status" value="1"/>
</dbReference>
<dbReference type="FunFam" id="3.40.50.300:FF:000159">
    <property type="entry name" value="Katanin p60 ATPase-containing subunit A1"/>
    <property type="match status" value="1"/>
</dbReference>
<dbReference type="Gene3D" id="1.10.8.60">
    <property type="match status" value="1"/>
</dbReference>
<dbReference type="Gene3D" id="3.40.50.300">
    <property type="entry name" value="P-loop containing nucleotide triphosphate hydrolases"/>
    <property type="match status" value="1"/>
</dbReference>
<dbReference type="Gene3D" id="1.20.58.80">
    <property type="entry name" value="Phosphotransferase system, lactose/cellobiose-type IIA subunit"/>
    <property type="match status" value="1"/>
</dbReference>
<dbReference type="HAMAP" id="MF_03023">
    <property type="entry name" value="Katanin_p60_A1"/>
    <property type="match status" value="1"/>
</dbReference>
<dbReference type="HAMAP" id="MF_03024">
    <property type="entry name" value="Katanin_p60_AL1"/>
    <property type="match status" value="1"/>
</dbReference>
<dbReference type="InterPro" id="IPR003593">
    <property type="entry name" value="AAA+_ATPase"/>
</dbReference>
<dbReference type="InterPro" id="IPR041569">
    <property type="entry name" value="AAA_lid_3"/>
</dbReference>
<dbReference type="InterPro" id="IPR003959">
    <property type="entry name" value="ATPase_AAA_core"/>
</dbReference>
<dbReference type="InterPro" id="IPR003960">
    <property type="entry name" value="ATPase_AAA_CS"/>
</dbReference>
<dbReference type="InterPro" id="IPR028596">
    <property type="entry name" value="KATNA1"/>
</dbReference>
<dbReference type="InterPro" id="IPR048611">
    <property type="entry name" value="KATNA1_MIT"/>
</dbReference>
<dbReference type="InterPro" id="IPR028594">
    <property type="entry name" value="Katnal1_chordates"/>
</dbReference>
<dbReference type="InterPro" id="IPR048612">
    <property type="entry name" value="KTNA1_AAA_dom"/>
</dbReference>
<dbReference type="InterPro" id="IPR050304">
    <property type="entry name" value="MT-severing_AAA_ATPase"/>
</dbReference>
<dbReference type="InterPro" id="IPR027417">
    <property type="entry name" value="P-loop_NTPase"/>
</dbReference>
<dbReference type="InterPro" id="IPR015415">
    <property type="entry name" value="Spast_Vps4_C"/>
</dbReference>
<dbReference type="PANTHER" id="PTHR23074">
    <property type="entry name" value="AAA DOMAIN-CONTAINING"/>
    <property type="match status" value="1"/>
</dbReference>
<dbReference type="PANTHER" id="PTHR23074:SF65">
    <property type="entry name" value="KATANIN P60 ATPASE-CONTAINING SUBUNIT A-LIKE 1"/>
    <property type="match status" value="1"/>
</dbReference>
<dbReference type="Pfam" id="PF00004">
    <property type="entry name" value="AAA"/>
    <property type="match status" value="1"/>
</dbReference>
<dbReference type="Pfam" id="PF17862">
    <property type="entry name" value="AAA_lid_3"/>
    <property type="match status" value="1"/>
</dbReference>
<dbReference type="Pfam" id="PF21126">
    <property type="entry name" value="KATNA1_MIT"/>
    <property type="match status" value="1"/>
</dbReference>
<dbReference type="Pfam" id="PF09336">
    <property type="entry name" value="Vps4_C"/>
    <property type="match status" value="1"/>
</dbReference>
<dbReference type="SMART" id="SM00382">
    <property type="entry name" value="AAA"/>
    <property type="match status" value="1"/>
</dbReference>
<dbReference type="SUPFAM" id="SSF52540">
    <property type="entry name" value="P-loop containing nucleoside triphosphate hydrolases"/>
    <property type="match status" value="1"/>
</dbReference>
<dbReference type="PROSITE" id="PS00674">
    <property type="entry name" value="AAA"/>
    <property type="match status" value="1"/>
</dbReference>
<keyword id="KW-0002">3D-structure</keyword>
<keyword id="KW-0007">Acetylation</keyword>
<keyword id="KW-0067">ATP-binding</keyword>
<keyword id="KW-0963">Cytoplasm</keyword>
<keyword id="KW-0206">Cytoskeleton</keyword>
<keyword id="KW-0413">Isomerase</keyword>
<keyword id="KW-0493">Microtubule</keyword>
<keyword id="KW-0547">Nucleotide-binding</keyword>
<keyword id="KW-0597">Phosphoprotein</keyword>
<keyword id="KW-1267">Proteomics identification</keyword>
<keyword id="KW-1185">Reference proteome</keyword>
<feature type="chain" id="PRO_0000084601" description="Katanin p60 ATPase-containing subunit A-like 1">
    <location>
        <begin position="1"/>
        <end position="490"/>
    </location>
</feature>
<feature type="region of interest" description="Disordered" evidence="4">
    <location>
        <begin position="95"/>
        <end position="184"/>
    </location>
</feature>
<feature type="compositionally biased region" description="Basic and acidic residues" evidence="4">
    <location>
        <begin position="116"/>
        <end position="127"/>
    </location>
</feature>
<feature type="compositionally biased region" description="Low complexity" evidence="4">
    <location>
        <begin position="128"/>
        <end position="139"/>
    </location>
</feature>
<feature type="compositionally biased region" description="Basic and acidic residues" evidence="4">
    <location>
        <begin position="143"/>
        <end position="169"/>
    </location>
</feature>
<feature type="binding site" evidence="3">
    <location>
        <begin position="248"/>
        <end position="255"/>
    </location>
    <ligand>
        <name>ATP</name>
        <dbReference type="ChEBI" id="CHEBI:30616"/>
    </ligand>
</feature>
<feature type="modified residue" description="N-acetylmethionine" evidence="7">
    <location>
        <position position="1"/>
    </location>
</feature>
<feature type="modified residue" description="Phosphoserine" evidence="1">
    <location>
        <position position="174"/>
    </location>
</feature>
<feature type="helix" evidence="8">
    <location>
        <begin position="186"/>
        <end position="198"/>
    </location>
</feature>
<feature type="helix" evidence="8">
    <location>
        <begin position="207"/>
        <end position="209"/>
    </location>
</feature>
<feature type="helix" evidence="8">
    <location>
        <begin position="214"/>
        <end position="224"/>
    </location>
</feature>
<feature type="helix" evidence="8">
    <location>
        <begin position="226"/>
        <end position="229"/>
    </location>
</feature>
<feature type="helix" evidence="8">
    <location>
        <begin position="231"/>
        <end position="236"/>
    </location>
</feature>
<feature type="strand" evidence="8">
    <location>
        <begin position="244"/>
        <end position="249"/>
    </location>
</feature>
<feature type="helix" evidence="8">
    <location>
        <begin position="254"/>
        <end position="265"/>
    </location>
</feature>
<feature type="strand" evidence="8">
    <location>
        <begin position="268"/>
        <end position="273"/>
    </location>
</feature>
<feature type="helix" evidence="8">
    <location>
        <begin position="274"/>
        <end position="279"/>
    </location>
</feature>
<feature type="helix" evidence="8">
    <location>
        <begin position="286"/>
        <end position="298"/>
    </location>
</feature>
<feature type="strand" evidence="8">
    <location>
        <begin position="300"/>
        <end position="307"/>
    </location>
</feature>
<feature type="helix" evidence="8">
    <location>
        <begin position="309"/>
        <end position="313"/>
    </location>
</feature>
<feature type="helix" evidence="8">
    <location>
        <begin position="319"/>
        <end position="338"/>
    </location>
</feature>
<feature type="strand" evidence="8">
    <location>
        <begin position="352"/>
        <end position="359"/>
    </location>
</feature>
<feature type="helix" evidence="8">
    <location>
        <begin position="361"/>
        <end position="363"/>
    </location>
</feature>
<feature type="helix" evidence="8">
    <location>
        <begin position="366"/>
        <end position="369"/>
    </location>
</feature>
<feature type="strand" evidence="8">
    <location>
        <begin position="374"/>
        <end position="377"/>
    </location>
</feature>
<feature type="helix" evidence="8">
    <location>
        <begin position="383"/>
        <end position="393"/>
    </location>
</feature>
<feature type="strand" evidence="8">
    <location>
        <begin position="395"/>
        <end position="397"/>
    </location>
</feature>
<feature type="helix" evidence="8">
    <location>
        <begin position="405"/>
        <end position="411"/>
    </location>
</feature>
<feature type="turn" evidence="8">
    <location>
        <begin position="412"/>
        <end position="414"/>
    </location>
</feature>
<feature type="helix" evidence="8">
    <location>
        <begin position="417"/>
        <end position="438"/>
    </location>
</feature>
<feature type="helix" evidence="8">
    <location>
        <begin position="441"/>
        <end position="446"/>
    </location>
</feature>
<feature type="helix" evidence="8">
    <location>
        <begin position="449"/>
        <end position="452"/>
    </location>
</feature>
<feature type="helix" evidence="8">
    <location>
        <begin position="458"/>
        <end position="467"/>
    </location>
</feature>
<feature type="helix" evidence="8">
    <location>
        <begin position="474"/>
        <end position="487"/>
    </location>
</feature>
<gene>
    <name evidence="3" type="primary">KATNAL1</name>
</gene>